<evidence type="ECO:0000255" key="1">
    <source>
        <dbReference type="HAMAP-Rule" id="MF_00385"/>
    </source>
</evidence>
<evidence type="ECO:0000305" key="2"/>
<dbReference type="EMBL" id="CU928163">
    <property type="protein sequence ID" value="CAR14105.1"/>
    <property type="molecule type" value="Genomic_DNA"/>
</dbReference>
<dbReference type="RefSeq" id="WP_000256450.1">
    <property type="nucleotide sequence ID" value="NC_011751.1"/>
</dbReference>
<dbReference type="RefSeq" id="YP_002413629.1">
    <property type="nucleotide sequence ID" value="NC_011751.1"/>
</dbReference>
<dbReference type="SMR" id="B7N6J5"/>
<dbReference type="STRING" id="585056.ECUMN_2934"/>
<dbReference type="GeneID" id="93774459"/>
<dbReference type="KEGG" id="eum:ECUMN_2934"/>
<dbReference type="PATRIC" id="fig|585056.7.peg.3115"/>
<dbReference type="HOGENOM" id="CLU_100590_5_1_6"/>
<dbReference type="Proteomes" id="UP000007097">
    <property type="component" value="Chromosome"/>
</dbReference>
<dbReference type="GO" id="GO:0005737">
    <property type="term" value="C:cytoplasm"/>
    <property type="evidence" value="ECO:0007669"/>
    <property type="project" value="UniProtKB-ARBA"/>
</dbReference>
<dbReference type="GO" id="GO:0015935">
    <property type="term" value="C:small ribosomal subunit"/>
    <property type="evidence" value="ECO:0007669"/>
    <property type="project" value="TreeGrafter"/>
</dbReference>
<dbReference type="GO" id="GO:0003735">
    <property type="term" value="F:structural constituent of ribosome"/>
    <property type="evidence" value="ECO:0007669"/>
    <property type="project" value="InterPro"/>
</dbReference>
<dbReference type="GO" id="GO:0006412">
    <property type="term" value="P:translation"/>
    <property type="evidence" value="ECO:0007669"/>
    <property type="project" value="UniProtKB-UniRule"/>
</dbReference>
<dbReference type="FunFam" id="3.30.1320.10:FF:000001">
    <property type="entry name" value="30S ribosomal protein S16"/>
    <property type="match status" value="1"/>
</dbReference>
<dbReference type="Gene3D" id="3.30.1320.10">
    <property type="match status" value="1"/>
</dbReference>
<dbReference type="HAMAP" id="MF_00385">
    <property type="entry name" value="Ribosomal_bS16"/>
    <property type="match status" value="1"/>
</dbReference>
<dbReference type="InterPro" id="IPR000307">
    <property type="entry name" value="Ribosomal_bS16"/>
</dbReference>
<dbReference type="InterPro" id="IPR020592">
    <property type="entry name" value="Ribosomal_bS16_CS"/>
</dbReference>
<dbReference type="InterPro" id="IPR023803">
    <property type="entry name" value="Ribosomal_bS16_dom_sf"/>
</dbReference>
<dbReference type="NCBIfam" id="TIGR00002">
    <property type="entry name" value="S16"/>
    <property type="match status" value="1"/>
</dbReference>
<dbReference type="PANTHER" id="PTHR12919">
    <property type="entry name" value="30S RIBOSOMAL PROTEIN S16"/>
    <property type="match status" value="1"/>
</dbReference>
<dbReference type="PANTHER" id="PTHR12919:SF20">
    <property type="entry name" value="SMALL RIBOSOMAL SUBUNIT PROTEIN BS16M"/>
    <property type="match status" value="1"/>
</dbReference>
<dbReference type="Pfam" id="PF00886">
    <property type="entry name" value="Ribosomal_S16"/>
    <property type="match status" value="1"/>
</dbReference>
<dbReference type="SUPFAM" id="SSF54565">
    <property type="entry name" value="Ribosomal protein S16"/>
    <property type="match status" value="1"/>
</dbReference>
<dbReference type="PROSITE" id="PS00732">
    <property type="entry name" value="RIBOSOMAL_S16"/>
    <property type="match status" value="1"/>
</dbReference>
<sequence length="82" mass="9191">MVTIRLARHGAKKRPFYQVVVADSRNARNGRFIERVGFFNPIASEKEEGTRLDLDRIAHWVGQGATISDRVAALIKEVNKAA</sequence>
<gene>
    <name evidence="1" type="primary">rpsP</name>
    <name type="ordered locus">ECUMN_2934</name>
</gene>
<accession>B7N6J5</accession>
<reference key="1">
    <citation type="journal article" date="2009" name="PLoS Genet.">
        <title>Organised genome dynamics in the Escherichia coli species results in highly diverse adaptive paths.</title>
        <authorList>
            <person name="Touchon M."/>
            <person name="Hoede C."/>
            <person name="Tenaillon O."/>
            <person name="Barbe V."/>
            <person name="Baeriswyl S."/>
            <person name="Bidet P."/>
            <person name="Bingen E."/>
            <person name="Bonacorsi S."/>
            <person name="Bouchier C."/>
            <person name="Bouvet O."/>
            <person name="Calteau A."/>
            <person name="Chiapello H."/>
            <person name="Clermont O."/>
            <person name="Cruveiller S."/>
            <person name="Danchin A."/>
            <person name="Diard M."/>
            <person name="Dossat C."/>
            <person name="Karoui M.E."/>
            <person name="Frapy E."/>
            <person name="Garry L."/>
            <person name="Ghigo J.M."/>
            <person name="Gilles A.M."/>
            <person name="Johnson J."/>
            <person name="Le Bouguenec C."/>
            <person name="Lescat M."/>
            <person name="Mangenot S."/>
            <person name="Martinez-Jehanne V."/>
            <person name="Matic I."/>
            <person name="Nassif X."/>
            <person name="Oztas S."/>
            <person name="Petit M.A."/>
            <person name="Pichon C."/>
            <person name="Rouy Z."/>
            <person name="Ruf C.S."/>
            <person name="Schneider D."/>
            <person name="Tourret J."/>
            <person name="Vacherie B."/>
            <person name="Vallenet D."/>
            <person name="Medigue C."/>
            <person name="Rocha E.P.C."/>
            <person name="Denamur E."/>
        </authorList>
    </citation>
    <scope>NUCLEOTIDE SEQUENCE [LARGE SCALE GENOMIC DNA]</scope>
    <source>
        <strain>UMN026 / ExPEC</strain>
    </source>
</reference>
<name>RS16_ECOLU</name>
<proteinExistence type="inferred from homology"/>
<comment type="similarity">
    <text evidence="1">Belongs to the bacterial ribosomal protein bS16 family.</text>
</comment>
<keyword id="KW-0687">Ribonucleoprotein</keyword>
<keyword id="KW-0689">Ribosomal protein</keyword>
<organism>
    <name type="scientific">Escherichia coli O17:K52:H18 (strain UMN026 / ExPEC)</name>
    <dbReference type="NCBI Taxonomy" id="585056"/>
    <lineage>
        <taxon>Bacteria</taxon>
        <taxon>Pseudomonadati</taxon>
        <taxon>Pseudomonadota</taxon>
        <taxon>Gammaproteobacteria</taxon>
        <taxon>Enterobacterales</taxon>
        <taxon>Enterobacteriaceae</taxon>
        <taxon>Escherichia</taxon>
    </lineage>
</organism>
<feature type="chain" id="PRO_1000196401" description="Small ribosomal subunit protein bS16">
    <location>
        <begin position="1"/>
        <end position="82"/>
    </location>
</feature>
<protein>
    <recommendedName>
        <fullName evidence="1">Small ribosomal subunit protein bS16</fullName>
    </recommendedName>
    <alternativeName>
        <fullName evidence="2">30S ribosomal protein S16</fullName>
    </alternativeName>
</protein>